<protein>
    <recommendedName>
        <fullName>Keratin-associated protein 21-3</fullName>
    </recommendedName>
</protein>
<evidence type="ECO:0000250" key="1"/>
<feature type="chain" id="PRO_0000386448" description="Keratin-associated protein 21-3">
    <location>
        <begin position="1"/>
        <end position="58"/>
    </location>
</feature>
<gene>
    <name type="primary">KRTAP21-3</name>
    <name type="synonym">KAP21.3</name>
</gene>
<reference key="1">
    <citation type="submission" date="2004-05" db="EMBL/GenBank/DDBJ databases">
        <title>Identification of eight novel genes from keratin associated protein gene cluster on human chromosome 21q22.11.</title>
        <authorList>
            <person name="Obayashi I."/>
            <person name="Shibuya K."/>
            <person name="Kudoh J."/>
            <person name="Shimizu N."/>
        </authorList>
    </citation>
    <scope>NUCLEOTIDE SEQUENCE [MRNA]</scope>
    <source>
        <tissue>Testis</tissue>
    </source>
</reference>
<sequence>MYFNYKSVCGSCGFGSCYGCGYGCIHSTHCGCNGYYGCYENKYSVIDDLIFFASKKCH</sequence>
<organism>
    <name type="scientific">Homo sapiens</name>
    <name type="common">Human</name>
    <dbReference type="NCBI Taxonomy" id="9606"/>
    <lineage>
        <taxon>Eukaryota</taxon>
        <taxon>Metazoa</taxon>
        <taxon>Chordata</taxon>
        <taxon>Craniata</taxon>
        <taxon>Vertebrata</taxon>
        <taxon>Euteleostomi</taxon>
        <taxon>Mammalia</taxon>
        <taxon>Eutheria</taxon>
        <taxon>Euarchontoglires</taxon>
        <taxon>Primates</taxon>
        <taxon>Haplorrhini</taxon>
        <taxon>Catarrhini</taxon>
        <taxon>Hominidae</taxon>
        <taxon>Homo</taxon>
    </lineage>
</organism>
<comment type="function">
    <text>In the hair cortex, hair keratin intermediate filaments are embedded in an interfilamentous matrix, consisting of hair keratin-associated proteins (KRTAP), which are essential for the formation of a rigid and resistant hair shaft through their extensive disulfide bond cross-linking with abundant cysteine residues of hair keratins. The matrix proteins include the high-sulfur and high-glycine-tyrosine keratins.</text>
</comment>
<comment type="subunit">
    <text evidence="1">Interacts with hair keratins.</text>
</comment>
<proteinExistence type="inferred from homology"/>
<dbReference type="EMBL" id="AB180042">
    <property type="protein sequence ID" value="BAE46381.1"/>
    <property type="molecule type" value="mRNA"/>
</dbReference>
<dbReference type="CCDS" id="CCDS54481.1"/>
<dbReference type="RefSeq" id="NP_001157907.1">
    <property type="nucleotide sequence ID" value="NM_001164435.1"/>
</dbReference>
<dbReference type="FunCoup" id="Q3LHN1">
    <property type="interactions" value="5"/>
</dbReference>
<dbReference type="STRING" id="9606.ENSP00000404517"/>
<dbReference type="BioMuta" id="KRTAP21-3"/>
<dbReference type="PaxDb" id="9606-ENSP00000404517"/>
<dbReference type="PeptideAtlas" id="Q3LHN1"/>
<dbReference type="Antibodypedia" id="62466">
    <property type="antibodies" value="5 antibodies from 5 providers"/>
</dbReference>
<dbReference type="DNASU" id="100288323"/>
<dbReference type="Ensembl" id="ENST00000444335.1">
    <property type="protein sequence ID" value="ENSP00000404517.1"/>
    <property type="gene ID" value="ENSG00000231068.1"/>
</dbReference>
<dbReference type="GeneID" id="100288323"/>
<dbReference type="KEGG" id="hsa:100288323"/>
<dbReference type="MANE-Select" id="ENST00000444335.1">
    <property type="protein sequence ID" value="ENSP00000404517.1"/>
    <property type="RefSeq nucleotide sequence ID" value="NM_001164435.1"/>
    <property type="RefSeq protein sequence ID" value="NP_001157907.1"/>
</dbReference>
<dbReference type="UCSC" id="uc021wii.1">
    <property type="organism name" value="human"/>
</dbReference>
<dbReference type="AGR" id="HGNC:34216"/>
<dbReference type="CTD" id="100288323"/>
<dbReference type="GeneCards" id="KRTAP21-3"/>
<dbReference type="HGNC" id="HGNC:34216">
    <property type="gene designation" value="KRTAP21-3"/>
</dbReference>
<dbReference type="HPA" id="ENSG00000231068">
    <property type="expression patterns" value="Not detected"/>
</dbReference>
<dbReference type="neXtProt" id="NX_Q3LHN1"/>
<dbReference type="OpenTargets" id="ENSG00000231068"/>
<dbReference type="PharmGKB" id="PA165378419"/>
<dbReference type="VEuPathDB" id="HostDB:ENSG00000231068"/>
<dbReference type="eggNOG" id="ENOG502TDYT">
    <property type="taxonomic scope" value="Eukaryota"/>
</dbReference>
<dbReference type="GeneTree" id="ENSGT00550000076392"/>
<dbReference type="HOGENOM" id="CLU_2978495_0_0_1"/>
<dbReference type="InParanoid" id="Q3LHN1"/>
<dbReference type="OMA" id="YYGCYEN"/>
<dbReference type="OrthoDB" id="10360209at2759"/>
<dbReference type="PAN-GO" id="Q3LHN1">
    <property type="GO annotations" value="0 GO annotations based on evolutionary models"/>
</dbReference>
<dbReference type="PathwayCommons" id="Q3LHN1"/>
<dbReference type="Reactome" id="R-HSA-6805567">
    <property type="pathway name" value="Keratinization"/>
</dbReference>
<dbReference type="SignaLink" id="Q3LHN1"/>
<dbReference type="BioGRID-ORCS" id="100288323">
    <property type="hits" value="10 hits in 1082 CRISPR screens"/>
</dbReference>
<dbReference type="Pharos" id="Q3LHN1">
    <property type="development level" value="Tdark"/>
</dbReference>
<dbReference type="PRO" id="PR:Q3LHN1"/>
<dbReference type="Proteomes" id="UP000005640">
    <property type="component" value="Chromosome 21"/>
</dbReference>
<dbReference type="RNAct" id="Q3LHN1">
    <property type="molecule type" value="protein"/>
</dbReference>
<dbReference type="Bgee" id="ENSG00000231068">
    <property type="expression patterns" value="Expressed in male germ line stem cell (sensu Vertebrata) in testis and 22 other cell types or tissues"/>
</dbReference>
<dbReference type="GO" id="GO:0005829">
    <property type="term" value="C:cytosol"/>
    <property type="evidence" value="ECO:0000304"/>
    <property type="project" value="Reactome"/>
</dbReference>
<dbReference type="GO" id="GO:0005882">
    <property type="term" value="C:intermediate filament"/>
    <property type="evidence" value="ECO:0007669"/>
    <property type="project" value="UniProtKB-KW"/>
</dbReference>
<keyword id="KW-0416">Keratin</keyword>
<keyword id="KW-1185">Reference proteome</keyword>
<keyword id="KW-0677">Repeat</keyword>
<accession>Q3LHN1</accession>
<name>KR213_HUMAN</name>